<dbReference type="EMBL" id="Y12000">
    <property type="protein sequence ID" value="CAA72729.1"/>
    <property type="molecule type" value="mRNA"/>
</dbReference>
<dbReference type="EMBL" id="BC059965">
    <property type="protein sequence ID" value="AAH59965.1"/>
    <property type="molecule type" value="mRNA"/>
</dbReference>
<dbReference type="SMR" id="O13262"/>
<dbReference type="DNASU" id="397893"/>
<dbReference type="GeneID" id="397893"/>
<dbReference type="KEGG" id="xla:397893"/>
<dbReference type="AGR" id="Xenbase:XB-GENE-6252312"/>
<dbReference type="CTD" id="397893"/>
<dbReference type="Xenbase" id="XB-GENE-6252312">
    <property type="gene designation" value="scnn1b.S"/>
</dbReference>
<dbReference type="OrthoDB" id="6502088at2759"/>
<dbReference type="Proteomes" id="UP000186698">
    <property type="component" value="Chromosome 9_10S"/>
</dbReference>
<dbReference type="Bgee" id="397893">
    <property type="expression patterns" value="Expressed in kidney and 12 other cell types or tissues"/>
</dbReference>
<dbReference type="GO" id="GO:0016324">
    <property type="term" value="C:apical plasma membrane"/>
    <property type="evidence" value="ECO:0007669"/>
    <property type="project" value="UniProtKB-SubCell"/>
</dbReference>
<dbReference type="GO" id="GO:0030659">
    <property type="term" value="C:cytoplasmic vesicle membrane"/>
    <property type="evidence" value="ECO:0007669"/>
    <property type="project" value="UniProtKB-SubCell"/>
</dbReference>
<dbReference type="GO" id="GO:0005886">
    <property type="term" value="C:plasma membrane"/>
    <property type="evidence" value="ECO:0000318"/>
    <property type="project" value="GO_Central"/>
</dbReference>
<dbReference type="GO" id="GO:0015280">
    <property type="term" value="F:ligand-gated sodium channel activity"/>
    <property type="evidence" value="ECO:0000318"/>
    <property type="project" value="GO_Central"/>
</dbReference>
<dbReference type="GO" id="GO:0035725">
    <property type="term" value="P:sodium ion transmembrane transport"/>
    <property type="evidence" value="ECO:0000250"/>
    <property type="project" value="UniProtKB"/>
</dbReference>
<dbReference type="FunFam" id="1.10.287.820:FF:000006">
    <property type="entry name" value="Amiloride-sensitive sodium channel subunit beta-2"/>
    <property type="match status" value="1"/>
</dbReference>
<dbReference type="Gene3D" id="1.10.287.820">
    <property type="entry name" value="Acid-sensing ion channel domain"/>
    <property type="match status" value="1"/>
</dbReference>
<dbReference type="Gene3D" id="2.60.470.10">
    <property type="entry name" value="Acid-sensing ion channels like domains"/>
    <property type="match status" value="1"/>
</dbReference>
<dbReference type="InterPro" id="IPR001873">
    <property type="entry name" value="ENaC"/>
</dbReference>
<dbReference type="InterPro" id="IPR004724">
    <property type="entry name" value="ENaC_chordates"/>
</dbReference>
<dbReference type="InterPro" id="IPR020903">
    <property type="entry name" value="ENaC_CS"/>
</dbReference>
<dbReference type="NCBIfam" id="TIGR00859">
    <property type="entry name" value="ENaC"/>
    <property type="match status" value="1"/>
</dbReference>
<dbReference type="PANTHER" id="PTHR11690:SF18">
    <property type="entry name" value="AMILORIDE-SENSITIVE SODIUM CHANNEL SUBUNIT BETA"/>
    <property type="match status" value="1"/>
</dbReference>
<dbReference type="PANTHER" id="PTHR11690">
    <property type="entry name" value="AMILORIDE-SENSITIVE SODIUM CHANNEL-RELATED"/>
    <property type="match status" value="1"/>
</dbReference>
<dbReference type="Pfam" id="PF00858">
    <property type="entry name" value="ASC"/>
    <property type="match status" value="1"/>
</dbReference>
<dbReference type="PRINTS" id="PR01078">
    <property type="entry name" value="AMINACHANNEL"/>
</dbReference>
<dbReference type="PROSITE" id="PS01206">
    <property type="entry name" value="ASC"/>
    <property type="match status" value="1"/>
</dbReference>
<accession>O13262</accession>
<accession>Q5D066</accession>
<comment type="function">
    <text evidence="7">This is one of the three pore-forming subunits of the heterotrimeric epithelial sodium channel (ENaC), a critical regulator of sodium balance and fluid homeostasis (PubMed:9159181). ENaC operates in epithelial tissues, where it mediates the electrodiffusion of sodium ions from extracellular fluid through the apical membrane of cells, with water following osmotically (PubMed:9159181).</text>
</comment>
<comment type="catalytic activity">
    <reaction evidence="7">
        <text>Na(+)(in) = Na(+)(out)</text>
        <dbReference type="Rhea" id="RHEA:34963"/>
        <dbReference type="ChEBI" id="CHEBI:29101"/>
    </reaction>
</comment>
<comment type="activity regulation">
    <text evidence="7">Originally identified and characterized by its inhibition by the diuretic drug amiloride.</text>
</comment>
<comment type="subunit">
    <text evidence="7">Component of the heterotrimeric epithelial sodium channel (ENaC) composed of an alpha/SCNN1A, a beta/SCNN1B and a gamma/SCNN1G subunit.</text>
</comment>
<comment type="subcellular location">
    <subcellularLocation>
        <location evidence="4">Apical cell membrane</location>
        <topology evidence="1">Multi-pass membrane protein</topology>
    </subcellularLocation>
    <subcellularLocation>
        <location evidence="2">Cytoplasmic vesicle membrane</location>
        <topology evidence="1">Multi-pass membrane protein</topology>
    </subcellularLocation>
</comment>
<comment type="similarity">
    <text evidence="8">Belongs to the amiloride-sensitive sodium channel (TC 1.A.6) family. SCNN1B subfamily.</text>
</comment>
<sequence length="646" mass="74112">MIQGKLKRLKRYFTRALHRIQKGPGYTYKELLVWFCDNTNTHGPKRIIKEGPKKRVMWFILTLVFAGLVFWQWGLLILTYLSYGVSVSLSIGFKTMEFPAVTVCNTNPYKYSRVKPLLKDLDELVATALDRIQYSSQTQANTFTYNNTRQNVTLDPALWNHIPLVVIDENDPSNPVIHNIFDNSVFYSKNNLLRNSSEDQTSYAQRYKVAMKLCTNNNTQCVYRNFTSGVQALREWYLLQLSIIFSNVPLSDRVDMGFKAEDLILTCLFGGQPCSYRNFTHIYDADYGNCYIFNWGQEGDDTMSSANPGADFGLKLVLDIEQDEYLPFLQTTAAARLILHQQRSFPFVKDLGIYAKPGTETSIAVLVDQLQQMEAPYSSCTVNGSDIPVQNLYEEFNSSYSIQSCLRSCYQEEMVKTCKCAHYQYPLPNGSEYCTNNKHPDWVPCYYGLRDSVAIRENCISLCQQPCNDTHYKMVISMADWPSAGAEDWIFHVLSYEKDSSYDITVNRNGIIRLNIYFQEFNYRSISESEATNVVWLLSNLGGQFGFWMGGSVLCIIEFGEIIIDCMWITILKLLAWIRNRRQRRQRPQYADPPPTVSELVEAHTNPGFQHDDGNHVTEDIPGTPPPNYDSLRVNTIEPVSSDEEN</sequence>
<feature type="chain" id="PRO_0000181275" description="Epithelial sodium channel subunit beta-2">
    <location>
        <begin position="1"/>
        <end position="646"/>
    </location>
</feature>
<feature type="topological domain" description="Cytoplasmic" evidence="1">
    <location>
        <begin position="1"/>
        <end position="57"/>
    </location>
</feature>
<feature type="transmembrane region" description="Helical; Name=1" evidence="5">
    <location>
        <begin position="58"/>
        <end position="78"/>
    </location>
</feature>
<feature type="topological domain" description="Extracellular" evidence="1">
    <location>
        <begin position="79"/>
        <end position="551"/>
    </location>
</feature>
<feature type="transmembrane region" description="Helical; Name=2" evidence="5">
    <location>
        <begin position="552"/>
        <end position="572"/>
    </location>
</feature>
<feature type="topological domain" description="Cytoplasmic" evidence="1">
    <location>
        <begin position="573"/>
        <end position="646"/>
    </location>
</feature>
<feature type="region of interest" description="Disordered" evidence="6">
    <location>
        <begin position="586"/>
        <end position="646"/>
    </location>
</feature>
<feature type="compositionally biased region" description="Basic and acidic residues" evidence="6">
    <location>
        <begin position="610"/>
        <end position="619"/>
    </location>
</feature>
<feature type="disulfide bond" evidence="3">
    <location>
        <begin position="104"/>
        <end position="290"/>
    </location>
</feature>
<feature type="disulfide bond" evidence="3">
    <location>
        <begin position="214"/>
        <end position="221"/>
    </location>
</feature>
<feature type="disulfide bond" evidence="3">
    <location>
        <begin position="267"/>
        <end position="274"/>
    </location>
</feature>
<feature type="disulfide bond" evidence="3">
    <location>
        <begin position="380"/>
        <end position="467"/>
    </location>
</feature>
<feature type="disulfide bond" evidence="3">
    <location>
        <begin position="405"/>
        <end position="463"/>
    </location>
</feature>
<feature type="disulfide bond" evidence="3">
    <location>
        <begin position="409"/>
        <end position="459"/>
    </location>
</feature>
<feature type="disulfide bond" evidence="3">
    <location>
        <begin position="418"/>
        <end position="445"/>
    </location>
</feature>
<feature type="disulfide bond" evidence="3">
    <location>
        <begin position="420"/>
        <end position="434"/>
    </location>
</feature>
<reference key="1">
    <citation type="journal article" date="1997" name="Proc. Natl. Acad. Sci. U.S.A.">
        <title>Novel isoforms of the beta and gamma subunits of the Xenopus epithelial Na channel provide information about the amiloride binding site and extracellular sodium sensing.</title>
        <authorList>
            <person name="Puoti A."/>
            <person name="May A."/>
            <person name="Rossier B.C."/>
            <person name="Horisberger J.-D."/>
        </authorList>
    </citation>
    <scope>NUCLEOTIDE SEQUENCE [MRNA]</scope>
    <scope>FUNCTION</scope>
    <scope>TRANSPORTER ACTIVITY</scope>
    <scope>ACTIVITY REGULATION</scope>
    <scope>SUBUNIT</scope>
</reference>
<reference key="2">
    <citation type="submission" date="2003-10" db="EMBL/GenBank/DDBJ databases">
        <authorList>
            <consortium name="NIH - Xenopus Gene Collection (XGC) project"/>
        </authorList>
    </citation>
    <scope>NUCLEOTIDE SEQUENCE [LARGE SCALE MRNA]</scope>
    <source>
        <tissue>Kidney</tissue>
    </source>
</reference>
<gene>
    <name type="primary">scnn1b-b</name>
</gene>
<keyword id="KW-1003">Cell membrane</keyword>
<keyword id="KW-0968">Cytoplasmic vesicle</keyword>
<keyword id="KW-1015">Disulfide bond</keyword>
<keyword id="KW-0407">Ion channel</keyword>
<keyword id="KW-0406">Ion transport</keyword>
<keyword id="KW-0472">Membrane</keyword>
<keyword id="KW-1185">Reference proteome</keyword>
<keyword id="KW-0915">Sodium</keyword>
<keyword id="KW-0894">Sodium channel</keyword>
<keyword id="KW-0739">Sodium transport</keyword>
<keyword id="KW-0812">Transmembrane</keyword>
<keyword id="KW-1133">Transmembrane helix</keyword>
<keyword id="KW-0813">Transport</keyword>
<proteinExistence type="evidence at protein level"/>
<organism>
    <name type="scientific">Xenopus laevis</name>
    <name type="common">African clawed frog</name>
    <dbReference type="NCBI Taxonomy" id="8355"/>
    <lineage>
        <taxon>Eukaryota</taxon>
        <taxon>Metazoa</taxon>
        <taxon>Chordata</taxon>
        <taxon>Craniata</taxon>
        <taxon>Vertebrata</taxon>
        <taxon>Euteleostomi</taxon>
        <taxon>Amphibia</taxon>
        <taxon>Batrachia</taxon>
        <taxon>Anura</taxon>
        <taxon>Pipoidea</taxon>
        <taxon>Pipidae</taxon>
        <taxon>Xenopodinae</taxon>
        <taxon>Xenopus</taxon>
        <taxon>Xenopus</taxon>
    </lineage>
</organism>
<name>SCNNC_XENLA</name>
<evidence type="ECO:0000250" key="1">
    <source>
        <dbReference type="UniProtKB" id="P37089"/>
    </source>
</evidence>
<evidence type="ECO:0000250" key="2">
    <source>
        <dbReference type="UniProtKB" id="P37090"/>
    </source>
</evidence>
<evidence type="ECO:0000250" key="3">
    <source>
        <dbReference type="UniProtKB" id="P51168"/>
    </source>
</evidence>
<evidence type="ECO:0000250" key="4">
    <source>
        <dbReference type="UniProtKB" id="P51169"/>
    </source>
</evidence>
<evidence type="ECO:0000255" key="5"/>
<evidence type="ECO:0000256" key="6">
    <source>
        <dbReference type="SAM" id="MobiDB-lite"/>
    </source>
</evidence>
<evidence type="ECO:0000269" key="7">
    <source>
    </source>
</evidence>
<evidence type="ECO:0000305" key="8"/>
<evidence type="ECO:0000305" key="9">
    <source>
    </source>
</evidence>
<protein>
    <recommendedName>
        <fullName evidence="9">Epithelial sodium channel subunit beta-2</fullName>
    </recommendedName>
    <alternativeName>
        <fullName>Amiloride-sensitive sodium channel subunit beta</fullName>
    </alternativeName>
    <alternativeName>
        <fullName>Beta-2-NaCH</fullName>
    </alternativeName>
    <alternativeName>
        <fullName>Epithelial Na(+) channel subunit beta-2</fullName>
        <shortName>Beta-2-ENaC</shortName>
    </alternativeName>
    <alternativeName>
        <fullName>Nonvoltage-gated sodium channel 1 subunit beta-2</fullName>
    </alternativeName>
    <alternativeName>
        <fullName>SCNEB2</fullName>
    </alternativeName>
</protein>